<proteinExistence type="evidence at protein level"/>
<sequence>MKIKKAAVIGAGVMGAAIAAQLANAGIPVLLLDIVLPDKPDRNFLAKAGVERALKARPAAFMDNDRARLIEVGNLEDDLKKLKDVDWVLEAIIEKLDAKHDLWEKVEKVVKKTAIISSNSSGIPMHLQIEGRSEDFQRRFVGAHFFNPPRYLHLLEVIPTDKTDPQVVKDFSEFAEHTLGKGVVVANDVPGFVANRIGVYGIVRAMQHMEKYGLTPAEVDQLTGPALGRASSATFRTADLSGLDIISHVATDIGGVTPDDEDFTLTESFKNMVAGGILGDKSGSGFYKKTKDEKARPRFSTTCKPANTKTRARCACPPWTPRANLSPSATPCTPWKARKATSCAPP</sequence>
<comment type="catalytic activity">
    <reaction evidence="1">
        <text>a (3S)-3-hydroxyacyl-CoA + NAD(+) = a 3-oxoacyl-CoA + NADH + H(+)</text>
        <dbReference type="Rhea" id="RHEA:22432"/>
        <dbReference type="ChEBI" id="CHEBI:15378"/>
        <dbReference type="ChEBI" id="CHEBI:57318"/>
        <dbReference type="ChEBI" id="CHEBI:57540"/>
        <dbReference type="ChEBI" id="CHEBI:57945"/>
        <dbReference type="ChEBI" id="CHEBI:90726"/>
        <dbReference type="EC" id="1.1.1.35"/>
    </reaction>
</comment>
<comment type="miscellaneous">
    <text>On the 2D-gel the determined pI of this protein is: 6.00, its MW is: 83 kDa.</text>
</comment>
<comment type="similarity">
    <text evidence="2">Belongs to the 3-hydroxyacyl-CoA dehydrogenase family.</text>
</comment>
<keyword id="KW-0903">Direct protein sequencing</keyword>
<keyword id="KW-0276">Fatty acid metabolism</keyword>
<keyword id="KW-0443">Lipid metabolism</keyword>
<keyword id="KW-0520">NAD</keyword>
<keyword id="KW-0560">Oxidoreductase</keyword>
<keyword id="KW-1185">Reference proteome</keyword>
<organism>
    <name type="scientific">Deinococcus radiodurans (strain ATCC 13939 / DSM 20539 / JCM 16871 / CCUG 27074 / LMG 4051 / NBRC 15346 / NCIMB 9279 / VKM B-1422 / R1)</name>
    <dbReference type="NCBI Taxonomy" id="243230"/>
    <lineage>
        <taxon>Bacteria</taxon>
        <taxon>Thermotogati</taxon>
        <taxon>Deinococcota</taxon>
        <taxon>Deinococci</taxon>
        <taxon>Deinococcales</taxon>
        <taxon>Deinococcaceae</taxon>
        <taxon>Deinococcus</taxon>
    </lineage>
</organism>
<dbReference type="EC" id="1.1.1.35"/>
<dbReference type="EMBL" id="AE000513">
    <property type="status" value="NOT_ANNOTATED_CDS"/>
    <property type="molecule type" value="Genomic_DNA"/>
</dbReference>
<dbReference type="SMR" id="P83589"/>
<dbReference type="InParanoid" id="P83589"/>
<dbReference type="Proteomes" id="UP000002524">
    <property type="component" value="Chromosome 1"/>
</dbReference>
<dbReference type="GO" id="GO:0003857">
    <property type="term" value="F:3-hydroxyacyl-CoA dehydrogenase activity"/>
    <property type="evidence" value="ECO:0007669"/>
    <property type="project" value="UniProtKB-EC"/>
</dbReference>
<dbReference type="GO" id="GO:0070403">
    <property type="term" value="F:NAD+ binding"/>
    <property type="evidence" value="ECO:0007669"/>
    <property type="project" value="InterPro"/>
</dbReference>
<dbReference type="GO" id="GO:0016491">
    <property type="term" value="F:oxidoreductase activity"/>
    <property type="evidence" value="ECO:0000318"/>
    <property type="project" value="GO_Central"/>
</dbReference>
<dbReference type="GO" id="GO:0009056">
    <property type="term" value="P:catabolic process"/>
    <property type="evidence" value="ECO:0007669"/>
    <property type="project" value="UniProtKB-ARBA"/>
</dbReference>
<dbReference type="GO" id="GO:0006631">
    <property type="term" value="P:fatty acid metabolic process"/>
    <property type="evidence" value="ECO:0007669"/>
    <property type="project" value="UniProtKB-KW"/>
</dbReference>
<dbReference type="Gene3D" id="1.10.1040.50">
    <property type="match status" value="1"/>
</dbReference>
<dbReference type="Gene3D" id="3.40.50.720">
    <property type="entry name" value="NAD(P)-binding Rossmann-like Domain"/>
    <property type="match status" value="1"/>
</dbReference>
<dbReference type="InterPro" id="IPR022694">
    <property type="entry name" value="3-OHacyl-CoA_DH"/>
</dbReference>
<dbReference type="InterPro" id="IPR006176">
    <property type="entry name" value="3-OHacyl-CoA_DH_NAD-bd"/>
</dbReference>
<dbReference type="InterPro" id="IPR006108">
    <property type="entry name" value="3HC_DH_C"/>
</dbReference>
<dbReference type="InterPro" id="IPR008927">
    <property type="entry name" value="6-PGluconate_DH-like_C_sf"/>
</dbReference>
<dbReference type="InterPro" id="IPR036291">
    <property type="entry name" value="NAD(P)-bd_dom_sf"/>
</dbReference>
<dbReference type="PANTHER" id="PTHR48075">
    <property type="entry name" value="3-HYDROXYACYL-COA DEHYDROGENASE FAMILY PROTEIN"/>
    <property type="match status" value="1"/>
</dbReference>
<dbReference type="PANTHER" id="PTHR48075:SF7">
    <property type="entry name" value="3-HYDROXYACYL-COA DEHYDROGENASE-RELATED"/>
    <property type="match status" value="1"/>
</dbReference>
<dbReference type="Pfam" id="PF00725">
    <property type="entry name" value="3HCDH"/>
    <property type="match status" value="1"/>
</dbReference>
<dbReference type="Pfam" id="PF02737">
    <property type="entry name" value="3HCDH_N"/>
    <property type="match status" value="1"/>
</dbReference>
<dbReference type="PIRSF" id="PIRSF000105">
    <property type="entry name" value="HCDH"/>
    <property type="match status" value="1"/>
</dbReference>
<dbReference type="SUPFAM" id="SSF48179">
    <property type="entry name" value="6-phosphogluconate dehydrogenase C-terminal domain-like"/>
    <property type="match status" value="1"/>
</dbReference>
<dbReference type="SUPFAM" id="SSF51735">
    <property type="entry name" value="NAD(P)-binding Rossmann-fold domains"/>
    <property type="match status" value="1"/>
</dbReference>
<protein>
    <recommendedName>
        <fullName>Probable 3-hydroxyacyl-CoA dehydrogenase</fullName>
        <ecNumber>1.1.1.35</ecNumber>
    </recommendedName>
</protein>
<evidence type="ECO:0000250" key="1">
    <source>
        <dbReference type="UniProtKB" id="Q8W1L6"/>
    </source>
</evidence>
<evidence type="ECO:0000255" key="2"/>
<evidence type="ECO:0000256" key="3">
    <source>
        <dbReference type="SAM" id="MobiDB-lite"/>
    </source>
</evidence>
<evidence type="ECO:0000305" key="4"/>
<name>HCDH_DEIRA</name>
<gene>
    <name type="ordered locus">DR_2477</name>
</gene>
<reference evidence="4" key="1">
    <citation type="journal article" date="1999" name="Science">
        <title>Genome sequence of the radioresistant bacterium Deinococcus radiodurans R1.</title>
        <authorList>
            <person name="White O."/>
            <person name="Eisen J.A."/>
            <person name="Heidelberg J.F."/>
            <person name="Hickey E.K."/>
            <person name="Peterson J.D."/>
            <person name="Dodson R.J."/>
            <person name="Haft D.H."/>
            <person name="Gwinn M.L."/>
            <person name="Nelson W.C."/>
            <person name="Richardson D.L."/>
            <person name="Moffat K.S."/>
            <person name="Qin H."/>
            <person name="Jiang L."/>
            <person name="Pamphile W."/>
            <person name="Crosby M."/>
            <person name="Shen M."/>
            <person name="Vamathevan J.J."/>
            <person name="Lam P."/>
            <person name="McDonald L.A."/>
            <person name="Utterback T.R."/>
            <person name="Zalewski C."/>
            <person name="Makarova K.S."/>
            <person name="Aravind L."/>
            <person name="Daly M.J."/>
            <person name="Minton K.W."/>
            <person name="Fleischmann R.D."/>
            <person name="Ketchum K.A."/>
            <person name="Nelson K.E."/>
            <person name="Salzberg S.L."/>
            <person name="Smith H.O."/>
            <person name="Venter J.C."/>
            <person name="Fraser C.M."/>
        </authorList>
    </citation>
    <scope>NUCLEOTIDE SEQUENCE [LARGE SCALE GENOMIC DNA]</scope>
    <source>
        <strain>ATCC 13939 / DSM 20539 / JCM 16871 / CCUG 27074 / LMG 4051 / NBRC 15346 / NCIMB 9279 / VKM B-1422 / R1</strain>
    </source>
</reference>
<reference evidence="4" key="2">
    <citation type="submission" date="2003-05" db="UniProtKB">
        <authorList>
            <person name="Joshi B.S."/>
            <person name="Apte S.K."/>
            <person name="Schmid R."/>
            <person name="Altendorf K."/>
        </authorList>
    </citation>
    <scope>PROTEIN SEQUENCE OF 1-16</scope>
    <source>
        <strain>ATCC 13939 / DSM 20539 / JCM 16871 / CCUG 27074 / LMG 4051 / NBRC 15346 / NCIMB 9279 / VKM B-1422 / R1</strain>
    </source>
</reference>
<feature type="chain" id="PRO_0000308488" description="Probable 3-hydroxyacyl-CoA dehydrogenase">
    <location>
        <begin position="1"/>
        <end position="346"/>
    </location>
</feature>
<feature type="region of interest" description="Disordered" evidence="3">
    <location>
        <begin position="322"/>
        <end position="346"/>
    </location>
</feature>
<accession>P83589</accession>